<protein>
    <recommendedName>
        <fullName evidence="1">Recombination protein RecR</fullName>
    </recommendedName>
</protein>
<proteinExistence type="inferred from homology"/>
<organism>
    <name type="scientific">Bacillus cereus (strain 03BB102)</name>
    <dbReference type="NCBI Taxonomy" id="572264"/>
    <lineage>
        <taxon>Bacteria</taxon>
        <taxon>Bacillati</taxon>
        <taxon>Bacillota</taxon>
        <taxon>Bacilli</taxon>
        <taxon>Bacillales</taxon>
        <taxon>Bacillaceae</taxon>
        <taxon>Bacillus</taxon>
        <taxon>Bacillus cereus group</taxon>
    </lineage>
</organism>
<accession>C1ES27</accession>
<comment type="function">
    <text evidence="1">May play a role in DNA repair. It seems to be involved in an RecBC-independent recombinational process of DNA repair. It may act with RecF and RecO.</text>
</comment>
<comment type="similarity">
    <text evidence="1">Belongs to the RecR family.</text>
</comment>
<gene>
    <name evidence="1" type="primary">recR</name>
    <name type="ordered locus">BCA_0028</name>
</gene>
<keyword id="KW-0227">DNA damage</keyword>
<keyword id="KW-0233">DNA recombination</keyword>
<keyword id="KW-0234">DNA repair</keyword>
<keyword id="KW-0479">Metal-binding</keyword>
<keyword id="KW-0862">Zinc</keyword>
<keyword id="KW-0863">Zinc-finger</keyword>
<dbReference type="EMBL" id="CP001407">
    <property type="protein sequence ID" value="ACO28792.1"/>
    <property type="molecule type" value="Genomic_DNA"/>
</dbReference>
<dbReference type="RefSeq" id="WP_000559169.1">
    <property type="nucleotide sequence ID" value="NZ_CP009318.1"/>
</dbReference>
<dbReference type="SMR" id="C1ES27"/>
<dbReference type="GeneID" id="93011050"/>
<dbReference type="KEGG" id="bcx:BCA_0028"/>
<dbReference type="PATRIC" id="fig|572264.18.peg.86"/>
<dbReference type="Proteomes" id="UP000002210">
    <property type="component" value="Chromosome"/>
</dbReference>
<dbReference type="GO" id="GO:0003677">
    <property type="term" value="F:DNA binding"/>
    <property type="evidence" value="ECO:0007669"/>
    <property type="project" value="UniProtKB-UniRule"/>
</dbReference>
<dbReference type="GO" id="GO:0008270">
    <property type="term" value="F:zinc ion binding"/>
    <property type="evidence" value="ECO:0007669"/>
    <property type="project" value="UniProtKB-KW"/>
</dbReference>
<dbReference type="GO" id="GO:0006310">
    <property type="term" value="P:DNA recombination"/>
    <property type="evidence" value="ECO:0007669"/>
    <property type="project" value="UniProtKB-UniRule"/>
</dbReference>
<dbReference type="GO" id="GO:0006281">
    <property type="term" value="P:DNA repair"/>
    <property type="evidence" value="ECO:0007669"/>
    <property type="project" value="UniProtKB-UniRule"/>
</dbReference>
<dbReference type="CDD" id="cd01025">
    <property type="entry name" value="TOPRIM_recR"/>
    <property type="match status" value="1"/>
</dbReference>
<dbReference type="Gene3D" id="3.30.60.80">
    <property type="match status" value="1"/>
</dbReference>
<dbReference type="Gene3D" id="3.40.1360.10">
    <property type="match status" value="1"/>
</dbReference>
<dbReference type="Gene3D" id="6.10.250.240">
    <property type="match status" value="1"/>
</dbReference>
<dbReference type="Gene3D" id="1.10.8.420">
    <property type="entry name" value="RecR Domain 1"/>
    <property type="match status" value="1"/>
</dbReference>
<dbReference type="HAMAP" id="MF_00017">
    <property type="entry name" value="RecR"/>
    <property type="match status" value="1"/>
</dbReference>
<dbReference type="InterPro" id="IPR000093">
    <property type="entry name" value="DNA_Rcmb_RecR"/>
</dbReference>
<dbReference type="InterPro" id="IPR023627">
    <property type="entry name" value="Rcmb_RecR"/>
</dbReference>
<dbReference type="InterPro" id="IPR015967">
    <property type="entry name" value="Rcmb_RecR_Znf"/>
</dbReference>
<dbReference type="InterPro" id="IPR006171">
    <property type="entry name" value="TOPRIM_dom"/>
</dbReference>
<dbReference type="InterPro" id="IPR034137">
    <property type="entry name" value="TOPRIM_RecR"/>
</dbReference>
<dbReference type="NCBIfam" id="TIGR00615">
    <property type="entry name" value="recR"/>
    <property type="match status" value="1"/>
</dbReference>
<dbReference type="PANTHER" id="PTHR30446">
    <property type="entry name" value="RECOMBINATION PROTEIN RECR"/>
    <property type="match status" value="1"/>
</dbReference>
<dbReference type="PANTHER" id="PTHR30446:SF0">
    <property type="entry name" value="RECOMBINATION PROTEIN RECR"/>
    <property type="match status" value="1"/>
</dbReference>
<dbReference type="Pfam" id="PF21175">
    <property type="entry name" value="RecR_C"/>
    <property type="match status" value="1"/>
</dbReference>
<dbReference type="Pfam" id="PF21176">
    <property type="entry name" value="RecR_HhH"/>
    <property type="match status" value="1"/>
</dbReference>
<dbReference type="Pfam" id="PF02132">
    <property type="entry name" value="RecR_ZnF"/>
    <property type="match status" value="1"/>
</dbReference>
<dbReference type="Pfam" id="PF13662">
    <property type="entry name" value="Toprim_4"/>
    <property type="match status" value="1"/>
</dbReference>
<dbReference type="SMART" id="SM00493">
    <property type="entry name" value="TOPRIM"/>
    <property type="match status" value="1"/>
</dbReference>
<dbReference type="SUPFAM" id="SSF111304">
    <property type="entry name" value="Recombination protein RecR"/>
    <property type="match status" value="1"/>
</dbReference>
<dbReference type="PROSITE" id="PS01300">
    <property type="entry name" value="RECR"/>
    <property type="match status" value="1"/>
</dbReference>
<dbReference type="PROSITE" id="PS50880">
    <property type="entry name" value="TOPRIM"/>
    <property type="match status" value="1"/>
</dbReference>
<evidence type="ECO:0000255" key="1">
    <source>
        <dbReference type="HAMAP-Rule" id="MF_00017"/>
    </source>
</evidence>
<reference key="1">
    <citation type="submission" date="2009-02" db="EMBL/GenBank/DDBJ databases">
        <title>Genome sequence of Bacillus cereus 03BB102.</title>
        <authorList>
            <person name="Dodson R.J."/>
            <person name="Jackson P."/>
            <person name="Munk A.C."/>
            <person name="Brettin T."/>
            <person name="Bruce D."/>
            <person name="Detter C."/>
            <person name="Tapia R."/>
            <person name="Han C."/>
            <person name="Sutton G."/>
            <person name="Sims D."/>
        </authorList>
    </citation>
    <scope>NUCLEOTIDE SEQUENCE [LARGE SCALE GENOMIC DNA]</scope>
    <source>
        <strain>03BB102</strain>
    </source>
</reference>
<sequence>MHYPEPISKLIDSFMKLPGIGPKTAVRLAFFVLDMKEDDVLGFAKALVNAKRDLAYCSVCGHITDRDPCYICNDSHRDQSVVCVVQEPKDVIAMEKMKEYQGVYHVLRGAISPMEGIGPEDINIPQLLKRLHDETVQEVILATNPNIEGEATAMYISRLLKPTGIKVTRIAHGLPVGGDLEYADEVTLSKALEGRREV</sequence>
<feature type="chain" id="PRO_1000116673" description="Recombination protein RecR">
    <location>
        <begin position="1"/>
        <end position="198"/>
    </location>
</feature>
<feature type="domain" description="Toprim" evidence="1">
    <location>
        <begin position="80"/>
        <end position="175"/>
    </location>
</feature>
<feature type="zinc finger region" description="C4-type" evidence="1">
    <location>
        <begin position="57"/>
        <end position="72"/>
    </location>
</feature>
<name>RECR_BACC3</name>